<reference key="1">
    <citation type="journal article" date="2000" name="Proc. Natl. Acad. Sci. U.S.A.">
        <title>Comparative structural and functional analysis of the olfactory receptor genes flanking the human and mouse beta-globin gene clusters.</title>
        <authorList>
            <person name="Bulger M."/>
            <person name="Bender M.A."/>
            <person name="van Doorninck J.H."/>
            <person name="Wertman B."/>
            <person name="Farrell C.M."/>
            <person name="Felsenfeld G."/>
            <person name="Groudine M."/>
            <person name="Hardison R."/>
        </authorList>
    </citation>
    <scope>NUCLEOTIDE SEQUENCE [GENOMIC DNA]</scope>
</reference>
<reference key="2">
    <citation type="submission" date="2005-09" db="EMBL/GenBank/DDBJ databases">
        <authorList>
            <person name="Mural R.J."/>
            <person name="Istrail S."/>
            <person name="Sutton G.G."/>
            <person name="Florea L."/>
            <person name="Halpern A.L."/>
            <person name="Mobarry C.M."/>
            <person name="Lippert R."/>
            <person name="Walenz B."/>
            <person name="Shatkay H."/>
            <person name="Dew I."/>
            <person name="Miller J.R."/>
            <person name="Flanigan M.J."/>
            <person name="Edwards N.J."/>
            <person name="Bolanos R."/>
            <person name="Fasulo D."/>
            <person name="Halldorsson B.V."/>
            <person name="Hannenhalli S."/>
            <person name="Turner R."/>
            <person name="Yooseph S."/>
            <person name="Lu F."/>
            <person name="Nusskern D.R."/>
            <person name="Shue B.C."/>
            <person name="Zheng X.H."/>
            <person name="Zhong F."/>
            <person name="Delcher A.L."/>
            <person name="Huson D.H."/>
            <person name="Kravitz S.A."/>
            <person name="Mouchard L."/>
            <person name="Reinert K."/>
            <person name="Remington K.A."/>
            <person name="Clark A.G."/>
            <person name="Waterman M.S."/>
            <person name="Eichler E.E."/>
            <person name="Adams M.D."/>
            <person name="Hunkapiller M.W."/>
            <person name="Myers E.W."/>
            <person name="Venter J.C."/>
        </authorList>
    </citation>
    <scope>NUCLEOTIDE SEQUENCE [LARGE SCALE GENOMIC DNA]</scope>
</reference>
<reference key="3">
    <citation type="journal article" date="2004" name="Genome Res.">
        <title>The status, quality, and expansion of the NIH full-length cDNA project: the Mammalian Gene Collection (MGC).</title>
        <authorList>
            <consortium name="The MGC Project Team"/>
        </authorList>
    </citation>
    <scope>NUCLEOTIDE SEQUENCE [LARGE SCALE MRNA]</scope>
    <source>
        <tissue>Testis</tissue>
    </source>
</reference>
<reference key="4">
    <citation type="journal article" date="2004" name="Proc. Natl. Acad. Sci. U.S.A.">
        <title>The human olfactory receptor gene family.</title>
        <authorList>
            <person name="Malnic B."/>
            <person name="Godfrey P.A."/>
            <person name="Buck L.B."/>
        </authorList>
    </citation>
    <scope>IDENTIFICATION</scope>
</reference>
<reference key="5">
    <citation type="journal article" date="2004" name="Proc. Natl. Acad. Sci. U.S.A.">
        <authorList>
            <person name="Malnic B."/>
            <person name="Godfrey P.A."/>
            <person name="Buck L.B."/>
        </authorList>
    </citation>
    <scope>ERRATUM OF PUBMED:14983052</scope>
</reference>
<keyword id="KW-1003">Cell membrane</keyword>
<keyword id="KW-1015">Disulfide bond</keyword>
<keyword id="KW-0297">G-protein coupled receptor</keyword>
<keyword id="KW-0325">Glycoprotein</keyword>
<keyword id="KW-0472">Membrane</keyword>
<keyword id="KW-0552">Olfaction</keyword>
<keyword id="KW-0675">Receptor</keyword>
<keyword id="KW-1185">Reference proteome</keyword>
<keyword id="KW-0716">Sensory transduction</keyword>
<keyword id="KW-0807">Transducer</keyword>
<keyword id="KW-0812">Transmembrane</keyword>
<keyword id="KW-1133">Transmembrane helix</keyword>
<feature type="chain" id="PRO_0000150770" description="Olfactory receptor 52D1">
    <location>
        <begin position="1"/>
        <end position="318"/>
    </location>
</feature>
<feature type="topological domain" description="Extracellular" evidence="1">
    <location>
        <begin position="1"/>
        <end position="28"/>
    </location>
</feature>
<feature type="transmembrane region" description="Helical; Name=1" evidence="1">
    <location>
        <begin position="29"/>
        <end position="49"/>
    </location>
</feature>
<feature type="topological domain" description="Cytoplasmic" evidence="1">
    <location>
        <begin position="50"/>
        <end position="57"/>
    </location>
</feature>
<feature type="transmembrane region" description="Helical; Name=2" evidence="1">
    <location>
        <begin position="58"/>
        <end position="78"/>
    </location>
</feature>
<feature type="topological domain" description="Extracellular" evidence="1">
    <location>
        <begin position="79"/>
        <end position="102"/>
    </location>
</feature>
<feature type="transmembrane region" description="Helical; Name=3" evidence="1">
    <location>
        <begin position="103"/>
        <end position="123"/>
    </location>
</feature>
<feature type="topological domain" description="Cytoplasmic" evidence="1">
    <location>
        <begin position="124"/>
        <end position="142"/>
    </location>
</feature>
<feature type="transmembrane region" description="Helical; Name=4" evidence="1">
    <location>
        <begin position="143"/>
        <end position="163"/>
    </location>
</feature>
<feature type="topological domain" description="Extracellular" evidence="1">
    <location>
        <begin position="164"/>
        <end position="199"/>
    </location>
</feature>
<feature type="transmembrane region" description="Helical; Name=5" evidence="1">
    <location>
        <begin position="200"/>
        <end position="220"/>
    </location>
</feature>
<feature type="topological domain" description="Cytoplasmic" evidence="1">
    <location>
        <begin position="221"/>
        <end position="240"/>
    </location>
</feature>
<feature type="transmembrane region" description="Helical; Name=6" evidence="1">
    <location>
        <begin position="241"/>
        <end position="261"/>
    </location>
</feature>
<feature type="topological domain" description="Extracellular" evidence="1">
    <location>
        <begin position="262"/>
        <end position="277"/>
    </location>
</feature>
<feature type="transmembrane region" description="Helical; Name=7" evidence="1">
    <location>
        <begin position="278"/>
        <end position="298"/>
    </location>
</feature>
<feature type="topological domain" description="Cytoplasmic" evidence="1">
    <location>
        <begin position="299"/>
        <end position="318"/>
    </location>
</feature>
<feature type="glycosylation site" description="N-linked (GlcNAc...) asparagine" evidence="1">
    <location>
        <position position="5"/>
    </location>
</feature>
<feature type="disulfide bond" evidence="2">
    <location>
        <begin position="100"/>
        <end position="192"/>
    </location>
</feature>
<feature type="sequence variant" id="VAR_034331" description="In dbSNP:rs7935144.">
    <original>R</original>
    <variation>C</variation>
    <location>
        <position position="154"/>
    </location>
</feature>
<feature type="sequence variant" id="VAR_034332" description="In dbSNP:rs7924754.">
    <original>D</original>
    <variation>E</variation>
    <location>
        <position position="213"/>
    </location>
</feature>
<feature type="sequence variant" id="VAR_034333" description="In dbSNP:rs7950082.">
    <original>Y</original>
    <variation>F</variation>
    <location>
        <position position="221"/>
    </location>
</feature>
<feature type="sequence variant" id="VAR_024146" description="In dbSNP:rs7101919.">
    <original>I</original>
    <variation>T</variation>
    <location>
        <position position="251"/>
    </location>
</feature>
<feature type="sequence variant" id="VAR_034334" description="In dbSNP:rs11037758.">
    <original>R</original>
    <variation>W</variation>
    <location>
        <position position="304"/>
    </location>
</feature>
<gene>
    <name type="primary">OR52D1</name>
</gene>
<comment type="function">
    <text evidence="3">Odorant receptor.</text>
</comment>
<comment type="subcellular location">
    <subcellularLocation>
        <location>Cell membrane</location>
        <topology>Multi-pass membrane protein</topology>
    </subcellularLocation>
</comment>
<comment type="similarity">
    <text evidence="2">Belongs to the G-protein coupled receptor 1 family.</text>
</comment>
<comment type="online information" name="Human Olfactory Receptor Data Exploratorium (HORDE)">
    <link uri="http://genome.weizmann.ac.il/horde/card/index/symbol:OR52D1"/>
</comment>
<organism>
    <name type="scientific">Homo sapiens</name>
    <name type="common">Human</name>
    <dbReference type="NCBI Taxonomy" id="9606"/>
    <lineage>
        <taxon>Eukaryota</taxon>
        <taxon>Metazoa</taxon>
        <taxon>Chordata</taxon>
        <taxon>Craniata</taxon>
        <taxon>Vertebrata</taxon>
        <taxon>Euteleostomi</taxon>
        <taxon>Mammalia</taxon>
        <taxon>Eutheria</taxon>
        <taxon>Euarchontoglires</taxon>
        <taxon>Primates</taxon>
        <taxon>Haplorrhini</taxon>
        <taxon>Catarrhini</taxon>
        <taxon>Hominidae</taxon>
        <taxon>Homo</taxon>
    </lineage>
</organism>
<accession>Q9H346</accession>
<accession>B9EGY9</accession>
<accession>Q6IFI6</accession>
<name>O52D1_HUMAN</name>
<sequence length="318" mass="35122">MSDSNLSDNHLPDTFFLTGIPGLEAAHFWIAIPFCAMYLVALVGNAALILVIAMDNALHAPMYLFLCLLSLTDLALSSTTVPKMLAILWLHAGEISFGGCLAQMFCVHSIYALESSILLAMAFDRYVAICNPLRYTTILNHAVIGRIGFVGLFRSVAIVSPFIFLLRRLPYCGHRVMTHTYCEHMGIARLACANITVNIVYGLTVALLAMGLDSILIAISYGFILHAVFHLPSHDAQHKALSTCGSHIGIILVFYIPAFFSFLTHRFGHHEVPKHVHIFLANLYVLVPPVLNPILYGARTKEIRSRLLKLLHLGKTSI</sequence>
<protein>
    <recommendedName>
        <fullName>Olfactory receptor 52D1</fullName>
    </recommendedName>
    <alternativeName>
        <fullName>Odorant receptor HOR5'beta14</fullName>
    </alternativeName>
    <alternativeName>
        <fullName>Olfactory receptor OR11-43</fullName>
    </alternativeName>
</protein>
<dbReference type="EMBL" id="AF137396">
    <property type="protein sequence ID" value="AAG41676.1"/>
    <property type="molecule type" value="Genomic_DNA"/>
</dbReference>
<dbReference type="EMBL" id="CH471064">
    <property type="protein sequence ID" value="EAW68791.1"/>
    <property type="molecule type" value="Genomic_DNA"/>
</dbReference>
<dbReference type="EMBL" id="BC136928">
    <property type="protein sequence ID" value="AAI36929.1"/>
    <property type="molecule type" value="mRNA"/>
</dbReference>
<dbReference type="EMBL" id="BC136930">
    <property type="protein sequence ID" value="AAI36931.1"/>
    <property type="molecule type" value="mRNA"/>
</dbReference>
<dbReference type="EMBL" id="BK004276">
    <property type="protein sequence ID" value="DAA04674.1"/>
    <property type="molecule type" value="Genomic_DNA"/>
</dbReference>
<dbReference type="CCDS" id="CCDS31384.1"/>
<dbReference type="RefSeq" id="NP_001005163.1">
    <property type="nucleotide sequence ID" value="NM_001005163.2"/>
</dbReference>
<dbReference type="SMR" id="Q9H346"/>
<dbReference type="FunCoup" id="Q9H346">
    <property type="interactions" value="467"/>
</dbReference>
<dbReference type="STRING" id="9606.ENSP00000326232"/>
<dbReference type="GlyCosmos" id="Q9H346">
    <property type="glycosylation" value="1 site, No reported glycans"/>
</dbReference>
<dbReference type="GlyGen" id="Q9H346">
    <property type="glycosylation" value="1 site"/>
</dbReference>
<dbReference type="iPTMnet" id="Q9H346"/>
<dbReference type="PhosphoSitePlus" id="Q9H346"/>
<dbReference type="BioMuta" id="OR52D1"/>
<dbReference type="DMDM" id="14423837"/>
<dbReference type="PaxDb" id="9606-ENSP00000326232"/>
<dbReference type="Antibodypedia" id="55470">
    <property type="antibodies" value="116 antibodies from 24 providers"/>
</dbReference>
<dbReference type="DNASU" id="390066"/>
<dbReference type="Ensembl" id="ENST00000322641.5">
    <property type="protein sequence ID" value="ENSP00000326232.5"/>
    <property type="gene ID" value="ENSG00000181609.5"/>
</dbReference>
<dbReference type="GeneID" id="390066"/>
<dbReference type="KEGG" id="hsa:390066"/>
<dbReference type="MANE-Select" id="ENST00000322641.5">
    <property type="protein sequence ID" value="ENSP00000326232.5"/>
    <property type="RefSeq nucleotide sequence ID" value="NM_001005163.2"/>
    <property type="RefSeq protein sequence ID" value="NP_001005163.1"/>
</dbReference>
<dbReference type="UCSC" id="uc010qzg.3">
    <property type="organism name" value="human"/>
</dbReference>
<dbReference type="AGR" id="HGNC:15212"/>
<dbReference type="CTD" id="390066"/>
<dbReference type="GeneCards" id="OR52D1"/>
<dbReference type="HGNC" id="HGNC:15212">
    <property type="gene designation" value="OR52D1"/>
</dbReference>
<dbReference type="HPA" id="ENSG00000181609">
    <property type="expression patterns" value="Tissue enriched (testis)"/>
</dbReference>
<dbReference type="neXtProt" id="NX_Q9H346"/>
<dbReference type="PharmGKB" id="PA32401"/>
<dbReference type="VEuPathDB" id="HostDB:ENSG00000181609"/>
<dbReference type="eggNOG" id="ENOG502SHDP">
    <property type="taxonomic scope" value="Eukaryota"/>
</dbReference>
<dbReference type="GeneTree" id="ENSGT01090000260043"/>
<dbReference type="HOGENOM" id="CLU_012526_0_0_1"/>
<dbReference type="InParanoid" id="Q9H346"/>
<dbReference type="OMA" id="FRSMAIV"/>
<dbReference type="OrthoDB" id="5969463at2759"/>
<dbReference type="PAN-GO" id="Q9H346">
    <property type="GO annotations" value="0 GO annotations based on evolutionary models"/>
</dbReference>
<dbReference type="PhylomeDB" id="Q9H346"/>
<dbReference type="TreeFam" id="TF343679"/>
<dbReference type="PathwayCommons" id="Q9H346"/>
<dbReference type="Reactome" id="R-HSA-9752946">
    <property type="pathway name" value="Expression and translocation of olfactory receptors"/>
</dbReference>
<dbReference type="BioGRID-ORCS" id="390066">
    <property type="hits" value="10 hits in 751 CRISPR screens"/>
</dbReference>
<dbReference type="GeneWiki" id="OR52D1"/>
<dbReference type="GenomeRNAi" id="390066"/>
<dbReference type="Pharos" id="Q9H346">
    <property type="development level" value="Tdark"/>
</dbReference>
<dbReference type="PRO" id="PR:Q9H346"/>
<dbReference type="Proteomes" id="UP000005640">
    <property type="component" value="Chromosome 11"/>
</dbReference>
<dbReference type="RNAct" id="Q9H346">
    <property type="molecule type" value="protein"/>
</dbReference>
<dbReference type="Bgee" id="ENSG00000181609">
    <property type="expression patterns" value="Expressed in sural nerve and 4 other cell types or tissues"/>
</dbReference>
<dbReference type="ExpressionAtlas" id="Q9H346">
    <property type="expression patterns" value="baseline and differential"/>
</dbReference>
<dbReference type="GO" id="GO:0016020">
    <property type="term" value="C:membrane"/>
    <property type="evidence" value="ECO:0000303"/>
    <property type="project" value="UniProtKB"/>
</dbReference>
<dbReference type="GO" id="GO:0005886">
    <property type="term" value="C:plasma membrane"/>
    <property type="evidence" value="ECO:0000318"/>
    <property type="project" value="GO_Central"/>
</dbReference>
<dbReference type="GO" id="GO:0004930">
    <property type="term" value="F:G protein-coupled receptor activity"/>
    <property type="evidence" value="ECO:0007669"/>
    <property type="project" value="UniProtKB-KW"/>
</dbReference>
<dbReference type="GO" id="GO:0004984">
    <property type="term" value="F:olfactory receptor activity"/>
    <property type="evidence" value="ECO:0000318"/>
    <property type="project" value="GO_Central"/>
</dbReference>
<dbReference type="GO" id="GO:0007608">
    <property type="term" value="P:sensory perception of smell"/>
    <property type="evidence" value="ECO:0000303"/>
    <property type="project" value="UniProtKB"/>
</dbReference>
<dbReference type="CDD" id="cd15221">
    <property type="entry name" value="7tmA_OR52B-like"/>
    <property type="match status" value="1"/>
</dbReference>
<dbReference type="FunFam" id="1.20.1070.10:FF:000006">
    <property type="entry name" value="Olfactory receptor"/>
    <property type="match status" value="1"/>
</dbReference>
<dbReference type="Gene3D" id="1.20.1070.10">
    <property type="entry name" value="Rhodopsin 7-helix transmembrane proteins"/>
    <property type="match status" value="1"/>
</dbReference>
<dbReference type="InterPro" id="IPR000276">
    <property type="entry name" value="GPCR_Rhodpsn"/>
</dbReference>
<dbReference type="InterPro" id="IPR017452">
    <property type="entry name" value="GPCR_Rhodpsn_7TM"/>
</dbReference>
<dbReference type="InterPro" id="IPR000725">
    <property type="entry name" value="Olfact_rcpt"/>
</dbReference>
<dbReference type="InterPro" id="IPR050402">
    <property type="entry name" value="OR51/52/56-like"/>
</dbReference>
<dbReference type="PANTHER" id="PTHR26450:SF75">
    <property type="entry name" value="OLFACTORY RECEPTOR 52D1"/>
    <property type="match status" value="1"/>
</dbReference>
<dbReference type="PANTHER" id="PTHR26450">
    <property type="entry name" value="OLFACTORY RECEPTOR 56B1-RELATED"/>
    <property type="match status" value="1"/>
</dbReference>
<dbReference type="Pfam" id="PF13853">
    <property type="entry name" value="7tm_4"/>
    <property type="match status" value="1"/>
</dbReference>
<dbReference type="PRINTS" id="PR00237">
    <property type="entry name" value="GPCRRHODOPSN"/>
</dbReference>
<dbReference type="PRINTS" id="PR00245">
    <property type="entry name" value="OLFACTORYR"/>
</dbReference>
<dbReference type="SUPFAM" id="SSF81321">
    <property type="entry name" value="Family A G protein-coupled receptor-like"/>
    <property type="match status" value="1"/>
</dbReference>
<dbReference type="PROSITE" id="PS00237">
    <property type="entry name" value="G_PROTEIN_RECEP_F1_1"/>
    <property type="match status" value="1"/>
</dbReference>
<dbReference type="PROSITE" id="PS50262">
    <property type="entry name" value="G_PROTEIN_RECEP_F1_2"/>
    <property type="match status" value="1"/>
</dbReference>
<proteinExistence type="evidence at transcript level"/>
<evidence type="ECO:0000255" key="1"/>
<evidence type="ECO:0000255" key="2">
    <source>
        <dbReference type="PROSITE-ProRule" id="PRU00521"/>
    </source>
</evidence>
<evidence type="ECO:0000305" key="3"/>